<keyword id="KW-0131">Cell cycle</keyword>
<keyword id="KW-0132">Cell division</keyword>
<keyword id="KW-0963">Cytoplasm</keyword>
<keyword id="KW-1185">Reference proteome</keyword>
<keyword id="KW-0717">Septation</keyword>
<sequence>MQTQVLFEHPLNEKMRTWLRIEFLIQQLTVNLPIVDHAGALHFFRNVSELLDVFERGEVRTELLKELDRQQRKLQTWIGVPGVDQSRIEALIQQLKAAGSVLISAPRIGQFLREDRLIALVRQRLSIPGGCCSFDLPTLHIWLHLPQAQRDSQVETWIASLNPLTQALTMVLDLIRQSAPFRKQTSLNGFYQDNGGDADLLRLNLSLDSQLYPQISGHKSRFAIRFMPLDTENGQVPERLDFELACC</sequence>
<name>ZAPD_SHISS</name>
<reference key="1">
    <citation type="journal article" date="2005" name="Nucleic Acids Res.">
        <title>Genome dynamics and diversity of Shigella species, the etiologic agents of bacillary dysentery.</title>
        <authorList>
            <person name="Yang F."/>
            <person name="Yang J."/>
            <person name="Zhang X."/>
            <person name="Chen L."/>
            <person name="Jiang Y."/>
            <person name="Yan Y."/>
            <person name="Tang X."/>
            <person name="Wang J."/>
            <person name="Xiong Z."/>
            <person name="Dong J."/>
            <person name="Xue Y."/>
            <person name="Zhu Y."/>
            <person name="Xu X."/>
            <person name="Sun L."/>
            <person name="Chen S."/>
            <person name="Nie H."/>
            <person name="Peng J."/>
            <person name="Xu J."/>
            <person name="Wang Y."/>
            <person name="Yuan Z."/>
            <person name="Wen Y."/>
            <person name="Yao Z."/>
            <person name="Shen Y."/>
            <person name="Qiang B."/>
            <person name="Hou Y."/>
            <person name="Yu J."/>
            <person name="Jin Q."/>
        </authorList>
    </citation>
    <scope>NUCLEOTIDE SEQUENCE [LARGE SCALE GENOMIC DNA]</scope>
    <source>
        <strain>Ss046</strain>
    </source>
</reference>
<protein>
    <recommendedName>
        <fullName evidence="1">Cell division protein ZapD</fullName>
    </recommendedName>
    <alternativeName>
        <fullName evidence="1">Z ring-associated protein D</fullName>
    </alternativeName>
</protein>
<gene>
    <name evidence="1" type="primary">zapD</name>
    <name type="ordered locus">SSON_0110</name>
</gene>
<feature type="chain" id="PRO_1000064927" description="Cell division protein ZapD">
    <location>
        <begin position="1"/>
        <end position="247"/>
    </location>
</feature>
<proteinExistence type="inferred from homology"/>
<evidence type="ECO:0000255" key="1">
    <source>
        <dbReference type="HAMAP-Rule" id="MF_01092"/>
    </source>
</evidence>
<accession>Q3Z5Q7</accession>
<organism>
    <name type="scientific">Shigella sonnei (strain Ss046)</name>
    <dbReference type="NCBI Taxonomy" id="300269"/>
    <lineage>
        <taxon>Bacteria</taxon>
        <taxon>Pseudomonadati</taxon>
        <taxon>Pseudomonadota</taxon>
        <taxon>Gammaproteobacteria</taxon>
        <taxon>Enterobacterales</taxon>
        <taxon>Enterobacteriaceae</taxon>
        <taxon>Shigella</taxon>
    </lineage>
</organism>
<dbReference type="EMBL" id="CP000038">
    <property type="protein sequence ID" value="AAZ86905.1"/>
    <property type="molecule type" value="Genomic_DNA"/>
</dbReference>
<dbReference type="RefSeq" id="WP_001194734.1">
    <property type="nucleotide sequence ID" value="NC_007384.1"/>
</dbReference>
<dbReference type="SMR" id="Q3Z5Q7"/>
<dbReference type="GeneID" id="93777333"/>
<dbReference type="KEGG" id="ssn:SSON_0110"/>
<dbReference type="HOGENOM" id="CLU_076303_0_0_6"/>
<dbReference type="Proteomes" id="UP000002529">
    <property type="component" value="Chromosome"/>
</dbReference>
<dbReference type="GO" id="GO:0032153">
    <property type="term" value="C:cell division site"/>
    <property type="evidence" value="ECO:0007669"/>
    <property type="project" value="TreeGrafter"/>
</dbReference>
<dbReference type="GO" id="GO:0005737">
    <property type="term" value="C:cytoplasm"/>
    <property type="evidence" value="ECO:0007669"/>
    <property type="project" value="UniProtKB-SubCell"/>
</dbReference>
<dbReference type="GO" id="GO:0000917">
    <property type="term" value="P:division septum assembly"/>
    <property type="evidence" value="ECO:0007669"/>
    <property type="project" value="UniProtKB-KW"/>
</dbReference>
<dbReference type="GO" id="GO:0043093">
    <property type="term" value="P:FtsZ-dependent cytokinesis"/>
    <property type="evidence" value="ECO:0007669"/>
    <property type="project" value="UniProtKB-UniRule"/>
</dbReference>
<dbReference type="FunFam" id="1.10.3900.10:FF:000001">
    <property type="entry name" value="Cell division protein ZapD"/>
    <property type="match status" value="1"/>
</dbReference>
<dbReference type="FunFam" id="2.60.440.10:FF:000001">
    <property type="entry name" value="Cell division protein ZapD"/>
    <property type="match status" value="1"/>
</dbReference>
<dbReference type="Gene3D" id="1.10.3900.10">
    <property type="entry name" value="YacF-like"/>
    <property type="match status" value="1"/>
</dbReference>
<dbReference type="Gene3D" id="2.60.440.10">
    <property type="entry name" value="YacF-like domains"/>
    <property type="match status" value="1"/>
</dbReference>
<dbReference type="HAMAP" id="MF_01092">
    <property type="entry name" value="ZapD"/>
    <property type="match status" value="1"/>
</dbReference>
<dbReference type="InterPro" id="IPR009777">
    <property type="entry name" value="ZapD"/>
</dbReference>
<dbReference type="InterPro" id="IPR027462">
    <property type="entry name" value="ZapD_C"/>
</dbReference>
<dbReference type="InterPro" id="IPR036268">
    <property type="entry name" value="ZapD_sf"/>
</dbReference>
<dbReference type="NCBIfam" id="NF003653">
    <property type="entry name" value="PRK05287.1-1"/>
    <property type="match status" value="1"/>
</dbReference>
<dbReference type="NCBIfam" id="NF003655">
    <property type="entry name" value="PRK05287.1-3"/>
    <property type="match status" value="1"/>
</dbReference>
<dbReference type="PANTHER" id="PTHR39455">
    <property type="entry name" value="CELL DIVISION PROTEIN ZAPD"/>
    <property type="match status" value="1"/>
</dbReference>
<dbReference type="PANTHER" id="PTHR39455:SF1">
    <property type="entry name" value="CELL DIVISION PROTEIN ZAPD"/>
    <property type="match status" value="1"/>
</dbReference>
<dbReference type="Pfam" id="PF07072">
    <property type="entry name" value="ZapD"/>
    <property type="match status" value="1"/>
</dbReference>
<dbReference type="SUPFAM" id="SSF160950">
    <property type="entry name" value="YacF-like"/>
    <property type="match status" value="1"/>
</dbReference>
<comment type="function">
    <text evidence="1">Cell division factor that enhances FtsZ-ring assembly. Directly interacts with FtsZ and promotes bundling of FtsZ protofilaments, with a reduction in FtsZ GTPase activity.</text>
</comment>
<comment type="subunit">
    <text evidence="1">Interacts with FtsZ.</text>
</comment>
<comment type="subcellular location">
    <subcellularLocation>
        <location evidence="1">Cytoplasm</location>
    </subcellularLocation>
    <text evidence="1">Localizes to mid-cell in an FtsZ-dependent manner.</text>
</comment>
<comment type="similarity">
    <text evidence="1">Belongs to the ZapD family.</text>
</comment>